<name>PSAA_AMPCA</name>
<comment type="function">
    <text>PsaA and PsaB bind P700, the primary electron donor of photosystem I (PSI), as well as the electron acceptors A0, A1 and FX. PSI is a plastocyanin/cytochrome c6-ferredoxin oxidoreductase, converting photonic excitation into a charge separation, which transfers an electron from the donor P700 chlorophyll pair to the spectroscopically characterized acceptors A0, A1, FX, FA and FB in turn. Oxidized P700 is reduced on the lumenal side of the thylakoid membrane by plastocyanin or cytochrome c6.</text>
</comment>
<comment type="catalytic activity">
    <reaction evidence="1">
        <text>reduced [plastocyanin] + hnu + oxidized [2Fe-2S]-[ferredoxin] = oxidized [plastocyanin] + reduced [2Fe-2S]-[ferredoxin]</text>
        <dbReference type="Rhea" id="RHEA:30407"/>
        <dbReference type="Rhea" id="RHEA-COMP:10000"/>
        <dbReference type="Rhea" id="RHEA-COMP:10001"/>
        <dbReference type="Rhea" id="RHEA-COMP:10039"/>
        <dbReference type="Rhea" id="RHEA-COMP:10040"/>
        <dbReference type="ChEBI" id="CHEBI:29036"/>
        <dbReference type="ChEBI" id="CHEBI:30212"/>
        <dbReference type="ChEBI" id="CHEBI:33737"/>
        <dbReference type="ChEBI" id="CHEBI:33738"/>
        <dbReference type="ChEBI" id="CHEBI:49552"/>
        <dbReference type="EC" id="1.97.1.12"/>
    </reaction>
</comment>
<comment type="cofactor">
    <text evidence="1">P700 is a chlorophyll a/chlorophyll a' dimer, A0 is one or more chlorophyll a, A1 is one or both phylloquinones and FX is a shared 4Fe-4S iron-sulfur center.</text>
</comment>
<comment type="subunit">
    <text evidence="1">The PsaA/B heterodimer binds the P700 chlorophyll special pair and subsequent electron acceptors. PSI consists of a core antenna complex that captures photons, and an electron transfer chain that converts photonic excitation into a charge separation. The eukaryotic PSI reaction center is composed of at least 11 subunits.</text>
</comment>
<comment type="subcellular location">
    <subcellularLocation>
        <location evidence="1">Plastid</location>
        <location evidence="1">Chloroplast thylakoid membrane</location>
        <topology evidence="1">Multi-pass membrane protein</topology>
    </subcellularLocation>
</comment>
<comment type="similarity">
    <text evidence="1">Belongs to the PsaA/PsaB family.</text>
</comment>
<feature type="chain" id="PRO_0000088529" description="Photosystem I P700 chlorophyll a apoprotein A1">
    <location>
        <begin position="1"/>
        <end position="678"/>
    </location>
</feature>
<feature type="transmembrane region" description="Helical; Name=I" evidence="1">
    <location>
        <begin position="75"/>
        <end position="98"/>
    </location>
</feature>
<feature type="transmembrane region" description="Helical; Name=II" evidence="1">
    <location>
        <begin position="152"/>
        <end position="175"/>
    </location>
</feature>
<feature type="transmembrane region" description="Helical; Name=III" evidence="1">
    <location>
        <begin position="192"/>
        <end position="216"/>
    </location>
</feature>
<feature type="transmembrane region" description="Helical; Name=IV" evidence="1">
    <location>
        <begin position="266"/>
        <end position="284"/>
    </location>
</feature>
<feature type="transmembrane region" description="Helical; Name=V" evidence="1">
    <location>
        <begin position="302"/>
        <end position="325"/>
    </location>
</feature>
<feature type="transmembrane region" description="Helical; Name=VI" evidence="1">
    <location>
        <begin position="341"/>
        <end position="367"/>
    </location>
</feature>
<feature type="transmembrane region" description="Helical; Name=VII" evidence="1">
    <location>
        <begin position="384"/>
        <end position="406"/>
    </location>
</feature>
<feature type="transmembrane region" description="Helical; Name=VIII" evidence="1">
    <location>
        <begin position="458"/>
        <end position="476"/>
    </location>
</feature>
<feature type="transmembrane region" description="Helical; Name=IX" evidence="1">
    <location>
        <begin position="516"/>
        <end position="537"/>
    </location>
</feature>
<feature type="transmembrane region" description="Helical; Name=X" evidence="1">
    <location>
        <begin position="591"/>
        <end position="613"/>
    </location>
</feature>
<feature type="transmembrane region" description="Helical; Name=XI" evidence="1">
    <location>
        <begin position="651"/>
        <end position="671"/>
    </location>
</feature>
<feature type="binding site" evidence="1">
    <location>
        <position position="500"/>
    </location>
    <ligand>
        <name>[4Fe-4S] cluster</name>
        <dbReference type="ChEBI" id="CHEBI:49883"/>
        <note>ligand shared between dimeric partners</note>
    </ligand>
</feature>
<feature type="binding site" evidence="1">
    <location>
        <position position="509"/>
    </location>
    <ligand>
        <name>[4Fe-4S] cluster</name>
        <dbReference type="ChEBI" id="CHEBI:49883"/>
        <note>ligand shared between dimeric partners</note>
    </ligand>
</feature>
<feature type="binding site" description="axial binding residue" evidence="1">
    <location>
        <position position="602"/>
    </location>
    <ligand>
        <name>chlorophyll a'</name>
        <dbReference type="ChEBI" id="CHEBI:189419"/>
        <label>A1</label>
    </ligand>
    <ligandPart>
        <name>Mg</name>
        <dbReference type="ChEBI" id="CHEBI:25107"/>
    </ligandPart>
</feature>
<feature type="binding site" description="axial binding residue" evidence="1">
    <location>
        <position position="610"/>
    </location>
    <ligand>
        <name>chlorophyll a</name>
        <dbReference type="ChEBI" id="CHEBI:58416"/>
        <label>A3</label>
    </ligand>
    <ligandPart>
        <name>Mg</name>
        <dbReference type="ChEBI" id="CHEBI:25107"/>
    </ligandPart>
</feature>
<feature type="binding site" evidence="1">
    <location>
        <position position="618"/>
    </location>
    <ligand>
        <name>chlorophyll a</name>
        <dbReference type="ChEBI" id="CHEBI:58416"/>
        <label>A3</label>
    </ligand>
</feature>
<feature type="binding site" evidence="1">
    <location>
        <position position="619"/>
    </location>
    <ligand>
        <name>phylloquinone</name>
        <dbReference type="ChEBI" id="CHEBI:18067"/>
        <label>A</label>
    </ligand>
</feature>
<feature type="helix" evidence="2">
    <location>
        <begin position="32"/>
        <end position="36"/>
    </location>
</feature>
<feature type="helix" evidence="2">
    <location>
        <begin position="38"/>
        <end position="45"/>
    </location>
</feature>
<feature type="helix" evidence="2">
    <location>
        <begin position="47"/>
        <end position="49"/>
    </location>
</feature>
<feature type="helix" evidence="2">
    <location>
        <begin position="52"/>
        <end position="60"/>
    </location>
</feature>
<feature type="helix" evidence="2">
    <location>
        <begin position="71"/>
        <end position="99"/>
    </location>
</feature>
<feature type="helix" evidence="2">
    <location>
        <begin position="103"/>
        <end position="108"/>
    </location>
</feature>
<feature type="strand" evidence="2">
    <location>
        <begin position="115"/>
        <end position="118"/>
    </location>
</feature>
<feature type="helix" evidence="2">
    <location>
        <begin position="125"/>
        <end position="128"/>
    </location>
</feature>
<feature type="strand" evidence="2">
    <location>
        <begin position="130"/>
        <end position="132"/>
    </location>
</feature>
<feature type="helix" evidence="2">
    <location>
        <begin position="137"/>
        <end position="143"/>
    </location>
</feature>
<feature type="helix" evidence="2">
    <location>
        <begin position="149"/>
        <end position="175"/>
    </location>
</feature>
<feature type="turn" evidence="2">
    <location>
        <begin position="181"/>
        <end position="187"/>
    </location>
</feature>
<feature type="helix" evidence="2">
    <location>
        <begin position="188"/>
        <end position="196"/>
    </location>
</feature>
<feature type="helix" evidence="2">
    <location>
        <begin position="198"/>
        <end position="223"/>
    </location>
</feature>
<feature type="helix" evidence="2">
    <location>
        <begin position="231"/>
        <end position="234"/>
    </location>
</feature>
<feature type="strand" evidence="2">
    <location>
        <begin position="235"/>
        <end position="239"/>
    </location>
</feature>
<feature type="helix" evidence="2">
    <location>
        <begin position="240"/>
        <end position="243"/>
    </location>
</feature>
<feature type="turn" evidence="2">
    <location>
        <begin position="258"/>
        <end position="260"/>
    </location>
</feature>
<feature type="helix" evidence="2">
    <location>
        <begin position="261"/>
        <end position="282"/>
    </location>
</feature>
<feature type="turn" evidence="2">
    <location>
        <begin position="292"/>
        <end position="295"/>
    </location>
</feature>
<feature type="helix" evidence="2">
    <location>
        <begin position="298"/>
        <end position="326"/>
    </location>
</feature>
<feature type="turn" evidence="2">
    <location>
        <begin position="331"/>
        <end position="335"/>
    </location>
</feature>
<feature type="helix" evidence="2">
    <location>
        <begin position="337"/>
        <end position="367"/>
    </location>
</feature>
<feature type="helix" evidence="2">
    <location>
        <begin position="373"/>
        <end position="375"/>
    </location>
</feature>
<feature type="helix" evidence="2">
    <location>
        <begin position="376"/>
        <end position="380"/>
    </location>
</feature>
<feature type="helix" evidence="2">
    <location>
        <begin position="382"/>
        <end position="412"/>
    </location>
</feature>
<feature type="helix" evidence="2">
    <location>
        <begin position="416"/>
        <end position="418"/>
    </location>
</feature>
<feature type="strand" evidence="2">
    <location>
        <begin position="419"/>
        <end position="421"/>
    </location>
</feature>
<feature type="helix" evidence="2">
    <location>
        <begin position="430"/>
        <end position="432"/>
    </location>
</feature>
<feature type="strand" evidence="2">
    <location>
        <begin position="444"/>
        <end position="448"/>
    </location>
</feature>
<feature type="helix" evidence="2">
    <location>
        <begin position="455"/>
        <end position="480"/>
    </location>
</feature>
<feature type="helix" evidence="2">
    <location>
        <begin position="491"/>
        <end position="494"/>
    </location>
</feature>
<feature type="strand" evidence="2">
    <location>
        <begin position="499"/>
        <end position="501"/>
    </location>
</feature>
<feature type="helix" evidence="2">
    <location>
        <begin position="513"/>
        <end position="546"/>
    </location>
</feature>
<feature type="helix" evidence="2">
    <location>
        <begin position="560"/>
        <end position="564"/>
    </location>
</feature>
<feature type="helix" evidence="2">
    <location>
        <begin position="568"/>
        <end position="574"/>
    </location>
</feature>
<feature type="helix" evidence="2">
    <location>
        <begin position="576"/>
        <end position="584"/>
    </location>
</feature>
<feature type="helix" evidence="2">
    <location>
        <begin position="592"/>
        <end position="613"/>
    </location>
</feature>
<feature type="helix" evidence="2">
    <location>
        <begin position="616"/>
        <end position="632"/>
    </location>
</feature>
<feature type="strand" evidence="2">
    <location>
        <begin position="638"/>
        <end position="640"/>
    </location>
</feature>
<feature type="helix" evidence="2">
    <location>
        <begin position="646"/>
        <end position="675"/>
    </location>
</feature>
<sequence>MPPGRPEVYQERFDIVQPHCSSEHTISLNTDFSKAAFGSATGLVAKAASQTTTAIWNLHADAHDFSNSSYLSKQVFAANLAHIGVAFIWLSGMHFHGAYFSNYLDWLQDPSIAPTAQQVSNIANQSVLNPIRVTSGFFNLWLAEGITSTYQLKVIAAFGLIASALCFLGSYFHMHSSTSFTRVLNTKLTSLSTHHLVGLLGLGSLAWAGHLIHISLPVNILMNAGVAVPSPHSLLSSKAVATIVEQLSFSALTSSDGYVWQPLVYSAMHHFALALVLIVGSVLGPLSTASNPLMSFTVGSSWHLVLGVQLFVTGTASVLYAQMSNAYPVYPYLLTDHPTVVSLFVHHMWIGGFFLVGAFAHLSIGLVRDTLPQSFSVVLTQRDIILGHLTWVVAFLGVHSFGLYVHNDTMQALGRPDDMFSDNAISLLPVFARWSTLTLNSTGSAVSVLGVELSTADFMVTHIHAFTIHTTVLILVKGFLYARSSRLVNDKYKLDFRYPCDGPGRGGTCQISPWDHVFLGLFWMYNSISVVIFHFFWEYQSNLASIKASAGGSIRALASDFELNSINTNGWLRNFLWSGAAQVIQSYGSPLAAYGLTFPASHFVWALSLMFLFSGRGYWQELIESVLWAHHKLYVVPHIQPRALSITSGRAVGFTHYLLGGIGSTWSFFLARIVATAG</sequence>
<dbReference type="EC" id="1.97.1.12" evidence="1"/>
<dbReference type="EMBL" id="AJ311631">
    <property type="protein sequence ID" value="CAC34545.1"/>
    <property type="molecule type" value="Genomic_DNA"/>
</dbReference>
<dbReference type="PDB" id="8JW0">
    <property type="method" value="EM"/>
    <property type="resolution" value="2.90 A"/>
    <property type="chains" value="a=31-677"/>
</dbReference>
<dbReference type="PDBsum" id="8JW0"/>
<dbReference type="EMDB" id="EMD-36678"/>
<dbReference type="SMR" id="P58309"/>
<dbReference type="GO" id="GO:0009535">
    <property type="term" value="C:chloroplast thylakoid membrane"/>
    <property type="evidence" value="ECO:0007669"/>
    <property type="project" value="UniProtKB-SubCell"/>
</dbReference>
<dbReference type="GO" id="GO:0009522">
    <property type="term" value="C:photosystem I"/>
    <property type="evidence" value="ECO:0007669"/>
    <property type="project" value="UniProtKB-KW"/>
</dbReference>
<dbReference type="GO" id="GO:0051539">
    <property type="term" value="F:4 iron, 4 sulfur cluster binding"/>
    <property type="evidence" value="ECO:0007669"/>
    <property type="project" value="UniProtKB-KW"/>
</dbReference>
<dbReference type="GO" id="GO:0016168">
    <property type="term" value="F:chlorophyll binding"/>
    <property type="evidence" value="ECO:0007669"/>
    <property type="project" value="UniProtKB-KW"/>
</dbReference>
<dbReference type="GO" id="GO:0009055">
    <property type="term" value="F:electron transfer activity"/>
    <property type="evidence" value="ECO:0007669"/>
    <property type="project" value="UniProtKB-UniRule"/>
</dbReference>
<dbReference type="GO" id="GO:0000287">
    <property type="term" value="F:magnesium ion binding"/>
    <property type="evidence" value="ECO:0007669"/>
    <property type="project" value="UniProtKB-UniRule"/>
</dbReference>
<dbReference type="GO" id="GO:0016491">
    <property type="term" value="F:oxidoreductase activity"/>
    <property type="evidence" value="ECO:0007669"/>
    <property type="project" value="UniProtKB-KW"/>
</dbReference>
<dbReference type="GO" id="GO:0015979">
    <property type="term" value="P:photosynthesis"/>
    <property type="evidence" value="ECO:0007669"/>
    <property type="project" value="UniProtKB-UniRule"/>
</dbReference>
<dbReference type="Gene3D" id="1.20.1130.10">
    <property type="entry name" value="Photosystem I PsaA/PsaB"/>
    <property type="match status" value="2"/>
</dbReference>
<dbReference type="HAMAP" id="MF_00458">
    <property type="entry name" value="PSI_PsaA"/>
    <property type="match status" value="1"/>
</dbReference>
<dbReference type="InterPro" id="IPR006243">
    <property type="entry name" value="PSI_PsaA"/>
</dbReference>
<dbReference type="InterPro" id="IPR001280">
    <property type="entry name" value="PSI_PsaA/B"/>
</dbReference>
<dbReference type="InterPro" id="IPR020586">
    <property type="entry name" value="PSI_PsaA/B_CS"/>
</dbReference>
<dbReference type="InterPro" id="IPR036408">
    <property type="entry name" value="PSI_PsaA/B_sf"/>
</dbReference>
<dbReference type="PANTHER" id="PTHR30128">
    <property type="entry name" value="OUTER MEMBRANE PROTEIN, OMPA-RELATED"/>
    <property type="match status" value="1"/>
</dbReference>
<dbReference type="PANTHER" id="PTHR30128:SF19">
    <property type="entry name" value="PHOTOSYSTEM I P700 CHLOROPHYLL A APOPROTEIN A1-RELATED"/>
    <property type="match status" value="1"/>
</dbReference>
<dbReference type="Pfam" id="PF00223">
    <property type="entry name" value="PsaA_PsaB"/>
    <property type="match status" value="3"/>
</dbReference>
<dbReference type="PRINTS" id="PR00257">
    <property type="entry name" value="PHOTSYSPSAAB"/>
</dbReference>
<dbReference type="SUPFAM" id="SSF81558">
    <property type="entry name" value="Photosystem I subunits PsaA/PsaB"/>
    <property type="match status" value="1"/>
</dbReference>
<dbReference type="PROSITE" id="PS00419">
    <property type="entry name" value="PHOTOSYSTEM_I_PSAAB"/>
    <property type="match status" value="1"/>
</dbReference>
<evidence type="ECO:0000255" key="1">
    <source>
        <dbReference type="HAMAP-Rule" id="MF_00458"/>
    </source>
</evidence>
<evidence type="ECO:0007829" key="2">
    <source>
        <dbReference type="PDB" id="8JW0"/>
    </source>
</evidence>
<reference key="1">
    <citation type="journal article" date="2001" name="FEBS Lett.">
        <title>'Empty' minicircles and petB/atpA and psbD/psbE (cytb559 alpha) genes in tandem in Amphidinium carterae plastid DNA.</title>
        <authorList>
            <person name="Hiller R.G."/>
        </authorList>
    </citation>
    <scope>NUCLEOTIDE SEQUENCE [GENOMIC DNA]</scope>
    <source>
        <strain>CS21</strain>
    </source>
</reference>
<gene>
    <name evidence="1" type="primary">psaA</name>
</gene>
<keyword id="KW-0002">3D-structure</keyword>
<keyword id="KW-0004">4Fe-4S</keyword>
<keyword id="KW-0148">Chlorophyll</keyword>
<keyword id="KW-0150">Chloroplast</keyword>
<keyword id="KW-0157">Chromophore</keyword>
<keyword id="KW-0249">Electron transport</keyword>
<keyword id="KW-0408">Iron</keyword>
<keyword id="KW-0411">Iron-sulfur</keyword>
<keyword id="KW-0460">Magnesium</keyword>
<keyword id="KW-0472">Membrane</keyword>
<keyword id="KW-0479">Metal-binding</keyword>
<keyword id="KW-0560">Oxidoreductase</keyword>
<keyword id="KW-0602">Photosynthesis</keyword>
<keyword id="KW-0603">Photosystem I</keyword>
<keyword id="KW-0934">Plastid</keyword>
<keyword id="KW-0793">Thylakoid</keyword>
<keyword id="KW-0812">Transmembrane</keyword>
<keyword id="KW-1133">Transmembrane helix</keyword>
<keyword id="KW-0813">Transport</keyword>
<accession>P58309</accession>
<organism>
    <name type="scientific">Amphidinium carterae</name>
    <name type="common">Dinoflagellate</name>
    <dbReference type="NCBI Taxonomy" id="2961"/>
    <lineage>
        <taxon>Eukaryota</taxon>
        <taxon>Sar</taxon>
        <taxon>Alveolata</taxon>
        <taxon>Dinophyceae</taxon>
        <taxon>Amphidiniales</taxon>
        <taxon>Amphidiniaceae</taxon>
        <taxon>Amphidinium</taxon>
    </lineage>
</organism>
<proteinExistence type="evidence at protein level"/>
<protein>
    <recommendedName>
        <fullName evidence="1">Photosystem I P700 chlorophyll a apoprotein A1</fullName>
        <ecNumber evidence="1">1.97.1.12</ecNumber>
    </recommendedName>
    <alternativeName>
        <fullName evidence="1">PSI-A</fullName>
    </alternativeName>
    <alternativeName>
        <fullName evidence="1">PsaA</fullName>
    </alternativeName>
</protein>
<geneLocation type="chloroplast"/>